<feature type="chain" id="PRO_0000438716" description="E3 ubiquitin-protein ligase RGLG3">
    <location>
        <begin position="1"/>
        <end position="367"/>
    </location>
</feature>
<feature type="domain" description="VWFA" evidence="2">
    <location>
        <begin position="37"/>
        <end position="257"/>
    </location>
</feature>
<feature type="zinc finger region" description="RING-type" evidence="1">
    <location>
        <begin position="323"/>
        <end position="356"/>
    </location>
</feature>
<evidence type="ECO:0000255" key="1">
    <source>
        <dbReference type="PROSITE-ProRule" id="PRU00175"/>
    </source>
</evidence>
<evidence type="ECO:0000255" key="2">
    <source>
        <dbReference type="PROSITE-ProRule" id="PRU00219"/>
    </source>
</evidence>
<evidence type="ECO:0000269" key="3">
    <source>
    </source>
</evidence>
<evidence type="ECO:0000269" key="4">
    <source>
    </source>
</evidence>
<evidence type="ECO:0000269" key="5">
    <source>
    </source>
</evidence>
<evidence type="ECO:0000269" key="6">
    <source>
    </source>
</evidence>
<evidence type="ECO:0000303" key="7">
    <source>
    </source>
</evidence>
<evidence type="ECO:0000305" key="8"/>
<evidence type="ECO:0000312" key="9">
    <source>
        <dbReference type="Araport" id="AT5G63970"/>
    </source>
</evidence>
<dbReference type="EC" id="2.3.2.27" evidence="8"/>
<dbReference type="EMBL" id="AB019227">
    <property type="protein sequence ID" value="BAA96900.1"/>
    <property type="status" value="ALT_SEQ"/>
    <property type="molecule type" value="Genomic_DNA"/>
</dbReference>
<dbReference type="EMBL" id="CP002688">
    <property type="protein sequence ID" value="AED97823.1"/>
    <property type="molecule type" value="Genomic_DNA"/>
</dbReference>
<dbReference type="EMBL" id="CP002688">
    <property type="protein sequence ID" value="AED97824.1"/>
    <property type="molecule type" value="Genomic_DNA"/>
</dbReference>
<dbReference type="EMBL" id="AY090939">
    <property type="protein sequence ID" value="AAM13989.1"/>
    <property type="molecule type" value="mRNA"/>
</dbReference>
<dbReference type="EMBL" id="AY123020">
    <property type="protein sequence ID" value="AAM67553.1"/>
    <property type="molecule type" value="mRNA"/>
</dbReference>
<dbReference type="RefSeq" id="NP_001032132.1">
    <property type="nucleotide sequence ID" value="NM_001037055.1"/>
</dbReference>
<dbReference type="RefSeq" id="NP_201202.2">
    <property type="nucleotide sequence ID" value="NM_125793.6"/>
</dbReference>
<dbReference type="SMR" id="Q8RX26"/>
<dbReference type="FunCoup" id="Q8RX26">
    <property type="interactions" value="4"/>
</dbReference>
<dbReference type="STRING" id="3702.Q8RX26"/>
<dbReference type="iPTMnet" id="Q8RX26"/>
<dbReference type="PaxDb" id="3702-AT5G63970.1"/>
<dbReference type="ProteomicsDB" id="236899"/>
<dbReference type="EnsemblPlants" id="AT5G63970.1">
    <property type="protein sequence ID" value="AT5G63970.1"/>
    <property type="gene ID" value="AT5G63970"/>
</dbReference>
<dbReference type="EnsemblPlants" id="AT5G63970.2">
    <property type="protein sequence ID" value="AT5G63970.2"/>
    <property type="gene ID" value="AT5G63970"/>
</dbReference>
<dbReference type="GeneID" id="836518"/>
<dbReference type="Gramene" id="AT5G63970.1">
    <property type="protein sequence ID" value="AT5G63970.1"/>
    <property type="gene ID" value="AT5G63970"/>
</dbReference>
<dbReference type="Gramene" id="AT5G63970.2">
    <property type="protein sequence ID" value="AT5G63970.2"/>
    <property type="gene ID" value="AT5G63970"/>
</dbReference>
<dbReference type="KEGG" id="ath:AT5G63970"/>
<dbReference type="Araport" id="AT5G63970"/>
<dbReference type="TAIR" id="AT5G63970">
    <property type="gene designation" value="RGLG3"/>
</dbReference>
<dbReference type="eggNOG" id="KOG1327">
    <property type="taxonomic scope" value="Eukaryota"/>
</dbReference>
<dbReference type="HOGENOM" id="CLU_035766_1_1_1"/>
<dbReference type="InParanoid" id="Q8RX26"/>
<dbReference type="OMA" id="DAMEHYD"/>
<dbReference type="PhylomeDB" id="Q8RX26"/>
<dbReference type="PRO" id="PR:Q8RX26"/>
<dbReference type="Proteomes" id="UP000006548">
    <property type="component" value="Chromosome 5"/>
</dbReference>
<dbReference type="ExpressionAtlas" id="Q8RX26">
    <property type="expression patterns" value="baseline and differential"/>
</dbReference>
<dbReference type="GO" id="GO:0005737">
    <property type="term" value="C:cytoplasm"/>
    <property type="evidence" value="ECO:0000314"/>
    <property type="project" value="UniProtKB"/>
</dbReference>
<dbReference type="GO" id="GO:0005634">
    <property type="term" value="C:nucleus"/>
    <property type="evidence" value="ECO:0000314"/>
    <property type="project" value="UniProtKB"/>
</dbReference>
<dbReference type="GO" id="GO:0004842">
    <property type="term" value="F:ubiquitin-protein transferase activity"/>
    <property type="evidence" value="ECO:0000314"/>
    <property type="project" value="TAIR"/>
</dbReference>
<dbReference type="GO" id="GO:0008270">
    <property type="term" value="F:zinc ion binding"/>
    <property type="evidence" value="ECO:0007669"/>
    <property type="project" value="UniProtKB-KW"/>
</dbReference>
<dbReference type="GO" id="GO:0042742">
    <property type="term" value="P:defense response to bacterium"/>
    <property type="evidence" value="ECO:0000315"/>
    <property type="project" value="TAIR"/>
</dbReference>
<dbReference type="GO" id="GO:0009867">
    <property type="term" value="P:jasmonic acid mediated signaling pathway"/>
    <property type="evidence" value="ECO:0000315"/>
    <property type="project" value="TAIR"/>
</dbReference>
<dbReference type="GO" id="GO:0009611">
    <property type="term" value="P:response to wounding"/>
    <property type="evidence" value="ECO:0000315"/>
    <property type="project" value="TAIR"/>
</dbReference>
<dbReference type="CDD" id="cd01459">
    <property type="entry name" value="vWA_copine_like"/>
    <property type="match status" value="1"/>
</dbReference>
<dbReference type="Gene3D" id="3.30.40.10">
    <property type="entry name" value="Zinc/RING finger domain, C3HC4 (zinc finger)"/>
    <property type="match status" value="1"/>
</dbReference>
<dbReference type="InterPro" id="IPR010734">
    <property type="entry name" value="Copine_C"/>
</dbReference>
<dbReference type="InterPro" id="IPR052079">
    <property type="entry name" value="E3_ligase/Copine_domain"/>
</dbReference>
<dbReference type="InterPro" id="IPR002035">
    <property type="entry name" value="VWF_A"/>
</dbReference>
<dbReference type="InterPro" id="IPR036465">
    <property type="entry name" value="vWFA_dom_sf"/>
</dbReference>
<dbReference type="InterPro" id="IPR001841">
    <property type="entry name" value="Znf_RING"/>
</dbReference>
<dbReference type="InterPro" id="IPR013083">
    <property type="entry name" value="Znf_RING/FYVE/PHD"/>
</dbReference>
<dbReference type="PANTHER" id="PTHR45751">
    <property type="entry name" value="COPINE FAMILY PROTEIN 1"/>
    <property type="match status" value="1"/>
</dbReference>
<dbReference type="PANTHER" id="PTHR45751:SF11">
    <property type="entry name" value="COPINE FAMILY PROTEIN 2"/>
    <property type="match status" value="1"/>
</dbReference>
<dbReference type="Pfam" id="PF07002">
    <property type="entry name" value="Copine"/>
    <property type="match status" value="1"/>
</dbReference>
<dbReference type="Pfam" id="PF13920">
    <property type="entry name" value="zf-C3HC4_3"/>
    <property type="match status" value="1"/>
</dbReference>
<dbReference type="SMART" id="SM00327">
    <property type="entry name" value="VWA"/>
    <property type="match status" value="1"/>
</dbReference>
<dbReference type="SUPFAM" id="SSF57850">
    <property type="entry name" value="RING/U-box"/>
    <property type="match status" value="1"/>
</dbReference>
<dbReference type="SUPFAM" id="SSF53300">
    <property type="entry name" value="vWA-like"/>
    <property type="match status" value="1"/>
</dbReference>
<dbReference type="PROSITE" id="PS50089">
    <property type="entry name" value="ZF_RING_2"/>
    <property type="match status" value="1"/>
</dbReference>
<reference key="1">
    <citation type="journal article" date="2000" name="DNA Res.">
        <title>Structural analysis of Arabidopsis thaliana chromosome 5. X. Sequence features of the regions of 3,076,755 bp covered by sixty P1 and TAC clones.</title>
        <authorList>
            <person name="Sato S."/>
            <person name="Nakamura Y."/>
            <person name="Kaneko T."/>
            <person name="Katoh T."/>
            <person name="Asamizu E."/>
            <person name="Kotani H."/>
            <person name="Tabata S."/>
        </authorList>
    </citation>
    <scope>NUCLEOTIDE SEQUENCE [LARGE SCALE GENOMIC DNA]</scope>
    <source>
        <strain>cv. Columbia</strain>
    </source>
</reference>
<reference key="2">
    <citation type="journal article" date="2017" name="Plant J.">
        <title>Araport11: a complete reannotation of the Arabidopsis thaliana reference genome.</title>
        <authorList>
            <person name="Cheng C.Y."/>
            <person name="Krishnakumar V."/>
            <person name="Chan A.P."/>
            <person name="Thibaud-Nissen F."/>
            <person name="Schobel S."/>
            <person name="Town C.D."/>
        </authorList>
    </citation>
    <scope>GENOME REANNOTATION</scope>
    <source>
        <strain>cv. Columbia</strain>
    </source>
</reference>
<reference key="3">
    <citation type="journal article" date="2003" name="Science">
        <title>Empirical analysis of transcriptional activity in the Arabidopsis genome.</title>
        <authorList>
            <person name="Yamada K."/>
            <person name="Lim J."/>
            <person name="Dale J.M."/>
            <person name="Chen H."/>
            <person name="Shinn P."/>
            <person name="Palm C.J."/>
            <person name="Southwick A.M."/>
            <person name="Wu H.C."/>
            <person name="Kim C.J."/>
            <person name="Nguyen M."/>
            <person name="Pham P.K."/>
            <person name="Cheuk R.F."/>
            <person name="Karlin-Newmann G."/>
            <person name="Liu S.X."/>
            <person name="Lam B."/>
            <person name="Sakano H."/>
            <person name="Wu T."/>
            <person name="Yu G."/>
            <person name="Miranda M."/>
            <person name="Quach H.L."/>
            <person name="Tripp M."/>
            <person name="Chang C.H."/>
            <person name="Lee J.M."/>
            <person name="Toriumi M.J."/>
            <person name="Chan M.M."/>
            <person name="Tang C.C."/>
            <person name="Onodera C.S."/>
            <person name="Deng J.M."/>
            <person name="Akiyama K."/>
            <person name="Ansari Y."/>
            <person name="Arakawa T."/>
            <person name="Banh J."/>
            <person name="Banno F."/>
            <person name="Bowser L."/>
            <person name="Brooks S.Y."/>
            <person name="Carninci P."/>
            <person name="Chao Q."/>
            <person name="Choy N."/>
            <person name="Enju A."/>
            <person name="Goldsmith A.D."/>
            <person name="Gurjal M."/>
            <person name="Hansen N.F."/>
            <person name="Hayashizaki Y."/>
            <person name="Johnson-Hopson C."/>
            <person name="Hsuan V.W."/>
            <person name="Iida K."/>
            <person name="Karnes M."/>
            <person name="Khan S."/>
            <person name="Koesema E."/>
            <person name="Ishida J."/>
            <person name="Jiang P.X."/>
            <person name="Jones T."/>
            <person name="Kawai J."/>
            <person name="Kamiya A."/>
            <person name="Meyers C."/>
            <person name="Nakajima M."/>
            <person name="Narusaka M."/>
            <person name="Seki M."/>
            <person name="Sakurai T."/>
            <person name="Satou M."/>
            <person name="Tamse R."/>
            <person name="Vaysberg M."/>
            <person name="Wallender E.K."/>
            <person name="Wong C."/>
            <person name="Yamamura Y."/>
            <person name="Yuan S."/>
            <person name="Shinozaki K."/>
            <person name="Davis R.W."/>
            <person name="Theologis A."/>
            <person name="Ecker J.R."/>
        </authorList>
    </citation>
    <scope>NUCLEOTIDE SEQUENCE [LARGE SCALE MRNA]</scope>
    <source>
        <strain>cv. Columbia</strain>
    </source>
</reference>
<reference key="4">
    <citation type="journal article" date="2012" name="Plant Physiol.">
        <title>Two novel RING-type ubiquitin ligases, RGLG3 and RGLG4, are essential for jasmonate-mediated responses in Arabidopsis.</title>
        <authorList>
            <person name="Zhang X."/>
            <person name="Wu Q."/>
            <person name="Ren J."/>
            <person name="Qian W."/>
            <person name="He S."/>
            <person name="Huang K."/>
            <person name="Yu X."/>
            <person name="Gao Y."/>
            <person name="Huang P."/>
            <person name="An C."/>
        </authorList>
    </citation>
    <scope>FUNCTION</scope>
    <scope>TISSUE SPECIFICITY</scope>
    <scope>DISRUPTION PHENOTYPE</scope>
</reference>
<reference key="5">
    <citation type="journal article" date="2014" name="Plant Cell">
        <title>DELLAs function as coactivators of GAI-ASSOCIATED FACTOR1 in regulation of gibberellin homeostasis and signaling in Arabidopsis.</title>
        <authorList>
            <person name="Fukazawa J."/>
            <person name="Teramura H."/>
            <person name="Murakoshi S."/>
            <person name="Nasuno K."/>
            <person name="Nishida N."/>
            <person name="Ito T."/>
            <person name="Yoshida M."/>
            <person name="Kamiya Y."/>
            <person name="Yamaguchi S."/>
            <person name="Takahashi Y."/>
        </authorList>
    </citation>
    <scope>INTERACTION WITH GAF1/IDD2 AND ENY/IDD1</scope>
    <source>
        <strain>cv. Columbia</strain>
    </source>
</reference>
<reference key="6">
    <citation type="journal article" date="2015" name="J. Exp. Bot.">
        <title>Hijacking of the jasmonate pathway by the mycotoxin fumonisin B1 (FB1) to initiate programmed cell death in Arabidopsis is modulated by RGLG3 and RGLG4.</title>
        <authorList>
            <person name="Zhang X."/>
            <person name="Wu Q."/>
            <person name="Cui S."/>
            <person name="Ren J."/>
            <person name="Qian W."/>
            <person name="Yang Y."/>
            <person name="He S."/>
            <person name="Chu J."/>
            <person name="Sun X."/>
            <person name="Yan C."/>
            <person name="Yu X."/>
            <person name="An C."/>
        </authorList>
    </citation>
    <scope>FUNCTION</scope>
    <scope>SUBCELLULAR LOCATION</scope>
    <scope>INDUCTION</scope>
</reference>
<reference key="7">
    <citation type="journal article" date="2016" name="Plant Cell Physiol.">
        <title>The Arabidopsis iron-sulfur protein GRXS17 is a target of the ubiquitin E3 ligases RGLG3 and RGLG4.</title>
        <authorList>
            <person name="Nagels Durand A."/>
            <person name="Inigo S."/>
            <person name="Ritter A."/>
            <person name="Iniesto E."/>
            <person name="De Clercq R."/>
            <person name="Staes A."/>
            <person name="Van Leene J."/>
            <person name="Rubio V."/>
            <person name="Gevaert K."/>
            <person name="De Jaeger G."/>
            <person name="Pauwels L."/>
            <person name="Goossens A."/>
        </authorList>
    </citation>
    <scope>FUNCTION</scope>
    <scope>INTERACTION WITH UBC30; GRXS17 AND GLB3</scope>
</reference>
<name>RGLG3_ARATH</name>
<organism>
    <name type="scientific">Arabidopsis thaliana</name>
    <name type="common">Mouse-ear cress</name>
    <dbReference type="NCBI Taxonomy" id="3702"/>
    <lineage>
        <taxon>Eukaryota</taxon>
        <taxon>Viridiplantae</taxon>
        <taxon>Streptophyta</taxon>
        <taxon>Embryophyta</taxon>
        <taxon>Tracheophyta</taxon>
        <taxon>Spermatophyta</taxon>
        <taxon>Magnoliopsida</taxon>
        <taxon>eudicotyledons</taxon>
        <taxon>Gunneridae</taxon>
        <taxon>Pentapetalae</taxon>
        <taxon>rosids</taxon>
        <taxon>malvids</taxon>
        <taxon>Brassicales</taxon>
        <taxon>Brassicaceae</taxon>
        <taxon>Camelineae</taxon>
        <taxon>Arabidopsis</taxon>
    </lineage>
</organism>
<gene>
    <name evidence="7" type="primary">RGLG3</name>
    <name evidence="9" type="ordered locus">At5g63970</name>
</gene>
<sequence>MNMSNKRNQQPSYIADHFSSLDQVITSLREAGLESSNLILGIDFTKSNEWTGRYSFNRKSLHAIGKRQNPYEKAISIIGRTLSPFDEDDLIPCFGFGDVTTRDQYVFSFYPENKSCDGLENAVKRYREIVPHLKLSGPTSFAPVIDAAINIVEQNNMQYHVLVIIADGQVTRNPDVPLGRLSPQEEATMNSIMAASHYPLSIVLVGVGDGPWDTMKQFDDNIPHREFDNFQFVNFTKIMSEHKDAAKKEAAFALAALMEIPFQYKATLSLNRKPVRSSHQHHKPLPPPPEVIERDNAVRSVPNQMTETAEKSDRLAPSTVPVCPICLTNPKDMAFSCGHTTCKECGVVITTCPLCRQPITTRIRLYT</sequence>
<keyword id="KW-0963">Cytoplasm</keyword>
<keyword id="KW-1184">Jasmonic acid signaling pathway</keyword>
<keyword id="KW-0479">Metal-binding</keyword>
<keyword id="KW-0539">Nucleus</keyword>
<keyword id="KW-1185">Reference proteome</keyword>
<keyword id="KW-0808">Transferase</keyword>
<keyword id="KW-0833">Ubl conjugation pathway</keyword>
<keyword id="KW-0862">Zinc</keyword>
<keyword id="KW-0863">Zinc-finger</keyword>
<accession>Q8RX26</accession>
<accession>Q9LVN6</accession>
<comment type="function">
    <text evidence="3 5 6">Possesses E3 ubiquitin-protein ligase in vitro. Acts as upstream modulator of jasmonate (JA) signaling in response to various stimuli, such as JA-inhibited root growth, JA-inductive gene expression, coronatine-mediated pathogen susceptibility, wound-stimulated expression of JA-responsive genes and wound-induced JA biosynthesis (PubMed:22898498). Controls fumonisin B1 (FB1)-triggered programmed cell death (PCD) by modulating the JA signaling pathway. May mediate salicylic acid (SA) suppression of JA signaling in FB1-induced responses (PubMed:25788731). May mediate the formation of 'Lys-48'-linked multiubiquitin chains. Mediates the polyubiquitination and subsequent proteasomal degradation of the target protein GRXS17 (PubMed:27497447).</text>
</comment>
<comment type="catalytic activity">
    <reaction evidence="8">
        <text>S-ubiquitinyl-[E2 ubiquitin-conjugating enzyme]-L-cysteine + [acceptor protein]-L-lysine = [E2 ubiquitin-conjugating enzyme]-L-cysteine + N(6)-ubiquitinyl-[acceptor protein]-L-lysine.</text>
        <dbReference type="EC" id="2.3.2.27"/>
    </reaction>
</comment>
<comment type="subunit">
    <text evidence="4 6">Interacts with UBC30, GRXS17 and GLB3 (PubMed:27497447). Binds to and coactivates GAF1/IDD2 and ENY/IDD1 (PubMed:25035403).</text>
</comment>
<comment type="subcellular location">
    <subcellularLocation>
        <location evidence="5">Cytoplasm</location>
    </subcellularLocation>
    <subcellularLocation>
        <location evidence="5">Nucleus</location>
    </subcellularLocation>
</comment>
<comment type="tissue specificity">
    <text evidence="3">Widely expressed.</text>
</comment>
<comment type="induction">
    <text evidence="5">Induced by the mycotoxin fumonisin B1.</text>
</comment>
<comment type="disruption phenotype">
    <text evidence="3">No visible phenotype under normal growth conditions. The double mutant plants rglg3 and rglg4 show decreased sensitivity to jasmonate.</text>
</comment>
<comment type="sequence caution" evidence="8">
    <conflict type="erroneous gene model prediction">
        <sequence resource="EMBL-CDS" id="BAA96900"/>
    </conflict>
</comment>
<protein>
    <recommendedName>
        <fullName evidence="8">E3 ubiquitin-protein ligase RGLG3</fullName>
        <ecNumber evidence="8">2.3.2.27</ecNumber>
    </recommendedName>
    <alternativeName>
        <fullName evidence="7">RING domain ligase 3</fullName>
    </alternativeName>
</protein>
<proteinExistence type="evidence at protein level"/>